<protein>
    <recommendedName>
        <fullName evidence="1">HTH-type transcriptional regulator MurR</fullName>
    </recommendedName>
    <alternativeName>
        <fullName evidence="1">MurPQ operon repressor</fullName>
    </alternativeName>
</protein>
<accession>A8ADG3</accession>
<evidence type="ECO:0000255" key="1">
    <source>
        <dbReference type="HAMAP-Rule" id="MF_02108"/>
    </source>
</evidence>
<name>MURR_CITK8</name>
<gene>
    <name evidence="1" type="primary">murR</name>
    <name type="ordered locus">CKO_00363</name>
</gene>
<proteinExistence type="inferred from homology"/>
<organism>
    <name type="scientific">Citrobacter koseri (strain ATCC BAA-895 / CDC 4225-83 / SGSC4696)</name>
    <dbReference type="NCBI Taxonomy" id="290338"/>
    <lineage>
        <taxon>Bacteria</taxon>
        <taxon>Pseudomonadati</taxon>
        <taxon>Pseudomonadota</taxon>
        <taxon>Gammaproteobacteria</taxon>
        <taxon>Enterobacterales</taxon>
        <taxon>Enterobacteriaceae</taxon>
        <taxon>Citrobacter</taxon>
    </lineage>
</organism>
<reference key="1">
    <citation type="submission" date="2007-08" db="EMBL/GenBank/DDBJ databases">
        <authorList>
            <consortium name="The Citrobacter koseri Genome Sequencing Project"/>
            <person name="McClelland M."/>
            <person name="Sanderson E.K."/>
            <person name="Porwollik S."/>
            <person name="Spieth J."/>
            <person name="Clifton W.S."/>
            <person name="Latreille P."/>
            <person name="Courtney L."/>
            <person name="Wang C."/>
            <person name="Pepin K."/>
            <person name="Bhonagiri V."/>
            <person name="Nash W."/>
            <person name="Johnson M."/>
            <person name="Thiruvilangam P."/>
            <person name="Wilson R."/>
        </authorList>
    </citation>
    <scope>NUCLEOTIDE SEQUENCE [LARGE SCALE GENOMIC DNA]</scope>
    <source>
        <strain>ATCC BAA-895 / CDC 4225-83 / SGSC4696</strain>
    </source>
</reference>
<comment type="function">
    <text evidence="1">Represses the expression of the murPQ operon involved in the uptake and degradation of N-acetylmuramic acid (MurNAc). Binds to two adjacent inverted repeats within the operator region. MurNAc 6-phosphate, the substrate of MurQ, is the specific inducer that weakens binding of MurR to the operator.</text>
</comment>
<comment type="pathway">
    <text>Amino-sugar metabolism; N-acetylmuramate degradation [regulation].</text>
</comment>
<comment type="subunit">
    <text evidence="1">Homotetramer.</text>
</comment>
<keyword id="KW-0119">Carbohydrate metabolism</keyword>
<keyword id="KW-0238">DNA-binding</keyword>
<keyword id="KW-1185">Reference proteome</keyword>
<keyword id="KW-0678">Repressor</keyword>
<keyword id="KW-0804">Transcription</keyword>
<keyword id="KW-0805">Transcription regulation</keyword>
<dbReference type="EMBL" id="CP000822">
    <property type="protein sequence ID" value="ABV11526.1"/>
    <property type="molecule type" value="Genomic_DNA"/>
</dbReference>
<dbReference type="RefSeq" id="WP_012131355.1">
    <property type="nucleotide sequence ID" value="NC_009792.1"/>
</dbReference>
<dbReference type="SMR" id="A8ADG3"/>
<dbReference type="STRING" id="290338.CKO_00363"/>
<dbReference type="GeneID" id="45134629"/>
<dbReference type="KEGG" id="cko:CKO_00363"/>
<dbReference type="HOGENOM" id="CLU_055769_0_2_6"/>
<dbReference type="OrthoDB" id="370421at2"/>
<dbReference type="UniPathway" id="UPA00342"/>
<dbReference type="Proteomes" id="UP000008148">
    <property type="component" value="Chromosome"/>
</dbReference>
<dbReference type="GO" id="GO:0097367">
    <property type="term" value="F:carbohydrate derivative binding"/>
    <property type="evidence" value="ECO:0007669"/>
    <property type="project" value="InterPro"/>
</dbReference>
<dbReference type="GO" id="GO:0003677">
    <property type="term" value="F:DNA binding"/>
    <property type="evidence" value="ECO:0007669"/>
    <property type="project" value="UniProtKB-KW"/>
</dbReference>
<dbReference type="GO" id="GO:0003700">
    <property type="term" value="F:DNA-binding transcription factor activity"/>
    <property type="evidence" value="ECO:0007669"/>
    <property type="project" value="UniProtKB-UniRule"/>
</dbReference>
<dbReference type="GO" id="GO:1901135">
    <property type="term" value="P:carbohydrate derivative metabolic process"/>
    <property type="evidence" value="ECO:0007669"/>
    <property type="project" value="InterPro"/>
</dbReference>
<dbReference type="GO" id="GO:0097173">
    <property type="term" value="P:N-acetylmuramic acid catabolic process"/>
    <property type="evidence" value="ECO:0007669"/>
    <property type="project" value="UniProtKB-UniPathway"/>
</dbReference>
<dbReference type="GO" id="GO:0045892">
    <property type="term" value="P:negative regulation of DNA-templated transcription"/>
    <property type="evidence" value="ECO:0007669"/>
    <property type="project" value="UniProtKB-UniRule"/>
</dbReference>
<dbReference type="GO" id="GO:0043470">
    <property type="term" value="P:regulation of carbohydrate catabolic process"/>
    <property type="evidence" value="ECO:0007669"/>
    <property type="project" value="UniProtKB-UniRule"/>
</dbReference>
<dbReference type="CDD" id="cd05013">
    <property type="entry name" value="SIS_RpiR"/>
    <property type="match status" value="1"/>
</dbReference>
<dbReference type="Gene3D" id="3.40.50.10490">
    <property type="entry name" value="Glucose-6-phosphate isomerase like protein, domain 1"/>
    <property type="match status" value="1"/>
</dbReference>
<dbReference type="Gene3D" id="1.10.10.10">
    <property type="entry name" value="Winged helix-like DNA-binding domain superfamily/Winged helix DNA-binding domain"/>
    <property type="match status" value="1"/>
</dbReference>
<dbReference type="HAMAP" id="MF_02108">
    <property type="entry name" value="HTH_type_MurR"/>
    <property type="match status" value="1"/>
</dbReference>
<dbReference type="InterPro" id="IPR009057">
    <property type="entry name" value="Homeodomain-like_sf"/>
</dbReference>
<dbReference type="InterPro" id="IPR000281">
    <property type="entry name" value="HTH_RpiR"/>
</dbReference>
<dbReference type="InterPro" id="IPR047640">
    <property type="entry name" value="RpiR-like"/>
</dbReference>
<dbReference type="InterPro" id="IPR035472">
    <property type="entry name" value="RpiR-like_SIS"/>
</dbReference>
<dbReference type="InterPro" id="IPR001347">
    <property type="entry name" value="SIS_dom"/>
</dbReference>
<dbReference type="InterPro" id="IPR046348">
    <property type="entry name" value="SIS_dom_sf"/>
</dbReference>
<dbReference type="InterPro" id="IPR022821">
    <property type="entry name" value="Tscrpt_reg_HTH_MurR"/>
</dbReference>
<dbReference type="InterPro" id="IPR036388">
    <property type="entry name" value="WH-like_DNA-bd_sf"/>
</dbReference>
<dbReference type="NCBIfam" id="NF012026">
    <property type="entry name" value="PRK15482.1"/>
    <property type="match status" value="1"/>
</dbReference>
<dbReference type="PANTHER" id="PTHR30514">
    <property type="entry name" value="GLUCOKINASE"/>
    <property type="match status" value="1"/>
</dbReference>
<dbReference type="PANTHER" id="PTHR30514:SF17">
    <property type="entry name" value="HTH-TYPE TRANSCRIPTIONAL REGULATOR MURR"/>
    <property type="match status" value="1"/>
</dbReference>
<dbReference type="Pfam" id="PF01418">
    <property type="entry name" value="HTH_6"/>
    <property type="match status" value="1"/>
</dbReference>
<dbReference type="Pfam" id="PF01380">
    <property type="entry name" value="SIS"/>
    <property type="match status" value="1"/>
</dbReference>
<dbReference type="SUPFAM" id="SSF46689">
    <property type="entry name" value="Homeodomain-like"/>
    <property type="match status" value="1"/>
</dbReference>
<dbReference type="SUPFAM" id="SSF53697">
    <property type="entry name" value="SIS domain"/>
    <property type="match status" value="1"/>
</dbReference>
<dbReference type="PROSITE" id="PS51071">
    <property type="entry name" value="HTH_RPIR"/>
    <property type="match status" value="1"/>
</dbReference>
<dbReference type="PROSITE" id="PS51464">
    <property type="entry name" value="SIS"/>
    <property type="match status" value="1"/>
</dbReference>
<feature type="chain" id="PRO_0000387752" description="HTH-type transcriptional regulator MurR">
    <location>
        <begin position="1"/>
        <end position="287"/>
    </location>
</feature>
<feature type="domain" description="HTH rpiR-type" evidence="1">
    <location>
        <begin position="1"/>
        <end position="77"/>
    </location>
</feature>
<feature type="domain" description="SIS" evidence="1">
    <location>
        <begin position="128"/>
        <end position="268"/>
    </location>
</feature>
<feature type="DNA-binding region" description="H-T-H motif" evidence="1">
    <location>
        <begin position="37"/>
        <end position="56"/>
    </location>
</feature>
<sequence length="287" mass="31817">MLYLAKMRNAEGELTENEQKIASFLLAHVSELKTVSSRNLAKQLEVSQSSIVKFAQKLGAKGFTELRMALIEEYSVNREKKHDTALHLHSTITSEDSLEVIARKLNREKMFALEETCSLMDFDRLKQVINLISKARLIQITGVGGSALVGRDLSFKLMKIGYRVACEVDTHVQATIAQALQEGDVQIAISYSGSKKEIVLCAEAARKQGATVIAITSLTDSPLRRLADYTLDTVSGETEWRSSSMSTRTAQNSVTDLLFVGMVQLNDVESLRMIERSSELINLLGRS</sequence>